<protein>
    <recommendedName>
        <fullName evidence="1">Dihydroorotate dehydrogenase (quinone)</fullName>
        <ecNumber evidence="1">1.3.5.2</ecNumber>
    </recommendedName>
    <alternativeName>
        <fullName evidence="1">DHOdehase</fullName>
        <shortName evidence="1">DHOD</shortName>
        <shortName evidence="1">DHODase</shortName>
    </alternativeName>
    <alternativeName>
        <fullName evidence="1">Dihydroorotate oxidase</fullName>
    </alternativeName>
</protein>
<gene>
    <name evidence="1" type="primary">pyrD</name>
    <name type="ordered locus">BH03870</name>
</gene>
<keyword id="KW-1003">Cell membrane</keyword>
<keyword id="KW-0285">Flavoprotein</keyword>
<keyword id="KW-0288">FMN</keyword>
<keyword id="KW-0472">Membrane</keyword>
<keyword id="KW-0560">Oxidoreductase</keyword>
<keyword id="KW-0665">Pyrimidine biosynthesis</keyword>
<organism>
    <name type="scientific">Bartonella henselae (strain ATCC 49882 / DSM 28221 / CCUG 30454 / Houston 1)</name>
    <name type="common">Rochalimaea henselae</name>
    <dbReference type="NCBI Taxonomy" id="283166"/>
    <lineage>
        <taxon>Bacteria</taxon>
        <taxon>Pseudomonadati</taxon>
        <taxon>Pseudomonadota</taxon>
        <taxon>Alphaproteobacteria</taxon>
        <taxon>Hyphomicrobiales</taxon>
        <taxon>Bartonellaceae</taxon>
        <taxon>Bartonella</taxon>
    </lineage>
</organism>
<sequence>MSFFRCIGRSALFMLDPEHAHRLAIMGLKSGLNSYQKVVDNRLCVTIAGLKFENFIGLAAGFDKNAEVVNDVFHLGFGFTEIGTVTPRPQVGNPKPRLFRLRKDEAIINRMGFNNDGRQIVYGRLHGYKRLGIVGINIGANKDTVDKIDDYITSIAYFYDVADYFTVNISSPNTPGLRDLQVRDSLHLLMNAISQARNEQKKKHGFFVPIFLKIAPDLSEKELDDVAEEMKLSDFDGLIVSNTTLSRQGLRECTLRNEEGGLSGRPLFERSTIVLAKMRQKLGKKIAIIGVGGIRDAKTALEKVKAGADLVQLYSGMVYEGPDLAITILKEILQFMQKDGVESIKAYRDQRVEYWAKHMLSS</sequence>
<dbReference type="EC" id="1.3.5.2" evidence="1"/>
<dbReference type="EMBL" id="BX897699">
    <property type="protein sequence ID" value="CAF27197.1"/>
    <property type="molecule type" value="Genomic_DNA"/>
</dbReference>
<dbReference type="RefSeq" id="WP_011180324.1">
    <property type="nucleotide sequence ID" value="NZ_LRIJ02000001.1"/>
</dbReference>
<dbReference type="SMR" id="Q6G4F7"/>
<dbReference type="PaxDb" id="283166-BH03870"/>
<dbReference type="EnsemblBacteria" id="CAF27197">
    <property type="protein sequence ID" value="CAF27197"/>
    <property type="gene ID" value="BH03870"/>
</dbReference>
<dbReference type="KEGG" id="bhe:BH03870"/>
<dbReference type="eggNOG" id="COG0167">
    <property type="taxonomic scope" value="Bacteria"/>
</dbReference>
<dbReference type="OrthoDB" id="9802377at2"/>
<dbReference type="UniPathway" id="UPA00070">
    <property type="reaction ID" value="UER00946"/>
</dbReference>
<dbReference type="Proteomes" id="UP000000421">
    <property type="component" value="Chromosome"/>
</dbReference>
<dbReference type="GO" id="GO:0005737">
    <property type="term" value="C:cytoplasm"/>
    <property type="evidence" value="ECO:0007669"/>
    <property type="project" value="InterPro"/>
</dbReference>
<dbReference type="GO" id="GO:0005886">
    <property type="term" value="C:plasma membrane"/>
    <property type="evidence" value="ECO:0007669"/>
    <property type="project" value="UniProtKB-SubCell"/>
</dbReference>
<dbReference type="GO" id="GO:0106430">
    <property type="term" value="F:dihydroorotate dehydrogenase (quinone) activity"/>
    <property type="evidence" value="ECO:0007669"/>
    <property type="project" value="UniProtKB-EC"/>
</dbReference>
<dbReference type="GO" id="GO:0006207">
    <property type="term" value="P:'de novo' pyrimidine nucleobase biosynthetic process"/>
    <property type="evidence" value="ECO:0007669"/>
    <property type="project" value="InterPro"/>
</dbReference>
<dbReference type="GO" id="GO:0044205">
    <property type="term" value="P:'de novo' UMP biosynthetic process"/>
    <property type="evidence" value="ECO:0007669"/>
    <property type="project" value="UniProtKB-UniRule"/>
</dbReference>
<dbReference type="CDD" id="cd04738">
    <property type="entry name" value="DHOD_2_like"/>
    <property type="match status" value="1"/>
</dbReference>
<dbReference type="Gene3D" id="3.20.20.70">
    <property type="entry name" value="Aldolase class I"/>
    <property type="match status" value="1"/>
</dbReference>
<dbReference type="HAMAP" id="MF_00225">
    <property type="entry name" value="DHO_dh_type2"/>
    <property type="match status" value="1"/>
</dbReference>
<dbReference type="InterPro" id="IPR013785">
    <property type="entry name" value="Aldolase_TIM"/>
</dbReference>
<dbReference type="InterPro" id="IPR050074">
    <property type="entry name" value="DHO_dehydrogenase"/>
</dbReference>
<dbReference type="InterPro" id="IPR005719">
    <property type="entry name" value="Dihydroorotate_DH_2"/>
</dbReference>
<dbReference type="InterPro" id="IPR005720">
    <property type="entry name" value="Dihydroorotate_DH_cat"/>
</dbReference>
<dbReference type="InterPro" id="IPR001295">
    <property type="entry name" value="Dihydroorotate_DH_CS"/>
</dbReference>
<dbReference type="NCBIfam" id="NF003645">
    <property type="entry name" value="PRK05286.1-2"/>
    <property type="match status" value="1"/>
</dbReference>
<dbReference type="NCBIfam" id="NF003652">
    <property type="entry name" value="PRK05286.2-5"/>
    <property type="match status" value="1"/>
</dbReference>
<dbReference type="NCBIfam" id="TIGR01036">
    <property type="entry name" value="pyrD_sub2"/>
    <property type="match status" value="1"/>
</dbReference>
<dbReference type="PANTHER" id="PTHR48109:SF4">
    <property type="entry name" value="DIHYDROOROTATE DEHYDROGENASE (QUINONE), MITOCHONDRIAL"/>
    <property type="match status" value="1"/>
</dbReference>
<dbReference type="PANTHER" id="PTHR48109">
    <property type="entry name" value="DIHYDROOROTATE DEHYDROGENASE (QUINONE), MITOCHONDRIAL-RELATED"/>
    <property type="match status" value="1"/>
</dbReference>
<dbReference type="Pfam" id="PF01180">
    <property type="entry name" value="DHO_dh"/>
    <property type="match status" value="1"/>
</dbReference>
<dbReference type="SUPFAM" id="SSF51395">
    <property type="entry name" value="FMN-linked oxidoreductases"/>
    <property type="match status" value="1"/>
</dbReference>
<dbReference type="PROSITE" id="PS00911">
    <property type="entry name" value="DHODEHASE_1"/>
    <property type="match status" value="1"/>
</dbReference>
<dbReference type="PROSITE" id="PS00912">
    <property type="entry name" value="DHODEHASE_2"/>
    <property type="match status" value="1"/>
</dbReference>
<comment type="function">
    <text evidence="1">Catalyzes the conversion of dihydroorotate to orotate with quinone as electron acceptor.</text>
</comment>
<comment type="catalytic activity">
    <reaction evidence="1">
        <text>(S)-dihydroorotate + a quinone = orotate + a quinol</text>
        <dbReference type="Rhea" id="RHEA:30187"/>
        <dbReference type="ChEBI" id="CHEBI:24646"/>
        <dbReference type="ChEBI" id="CHEBI:30839"/>
        <dbReference type="ChEBI" id="CHEBI:30864"/>
        <dbReference type="ChEBI" id="CHEBI:132124"/>
        <dbReference type="EC" id="1.3.5.2"/>
    </reaction>
</comment>
<comment type="cofactor">
    <cofactor evidence="1">
        <name>FMN</name>
        <dbReference type="ChEBI" id="CHEBI:58210"/>
    </cofactor>
    <text evidence="1">Binds 1 FMN per subunit.</text>
</comment>
<comment type="pathway">
    <text evidence="1">Pyrimidine metabolism; UMP biosynthesis via de novo pathway; orotate from (S)-dihydroorotate (quinone route): step 1/1.</text>
</comment>
<comment type="subunit">
    <text evidence="1">Monomer.</text>
</comment>
<comment type="subcellular location">
    <subcellularLocation>
        <location evidence="1">Cell membrane</location>
        <topology evidence="1">Peripheral membrane protein</topology>
    </subcellularLocation>
</comment>
<comment type="similarity">
    <text evidence="1">Belongs to the dihydroorotate dehydrogenase family. Type 2 subfamily.</text>
</comment>
<feature type="chain" id="PRO_0000336454" description="Dihydroorotate dehydrogenase (quinone)">
    <location>
        <begin position="1"/>
        <end position="362"/>
    </location>
</feature>
<feature type="active site" description="Nucleophile" evidence="1">
    <location>
        <position position="171"/>
    </location>
</feature>
<feature type="binding site" evidence="1">
    <location>
        <begin position="60"/>
        <end position="64"/>
    </location>
    <ligand>
        <name>FMN</name>
        <dbReference type="ChEBI" id="CHEBI:58210"/>
    </ligand>
</feature>
<feature type="binding site" evidence="1">
    <location>
        <position position="64"/>
    </location>
    <ligand>
        <name>substrate</name>
    </ligand>
</feature>
<feature type="binding site" evidence="1">
    <location>
        <position position="84"/>
    </location>
    <ligand>
        <name>FMN</name>
        <dbReference type="ChEBI" id="CHEBI:58210"/>
    </ligand>
</feature>
<feature type="binding site" evidence="1">
    <location>
        <begin position="109"/>
        <end position="113"/>
    </location>
    <ligand>
        <name>substrate</name>
    </ligand>
</feature>
<feature type="binding site" evidence="1">
    <location>
        <position position="137"/>
    </location>
    <ligand>
        <name>FMN</name>
        <dbReference type="ChEBI" id="CHEBI:58210"/>
    </ligand>
</feature>
<feature type="binding site" evidence="1">
    <location>
        <position position="168"/>
    </location>
    <ligand>
        <name>FMN</name>
        <dbReference type="ChEBI" id="CHEBI:58210"/>
    </ligand>
</feature>
<feature type="binding site" evidence="1">
    <location>
        <position position="168"/>
    </location>
    <ligand>
        <name>substrate</name>
    </ligand>
</feature>
<feature type="binding site" evidence="1">
    <location>
        <position position="173"/>
    </location>
    <ligand>
        <name>substrate</name>
    </ligand>
</feature>
<feature type="binding site" evidence="1">
    <location>
        <position position="213"/>
    </location>
    <ligand>
        <name>FMN</name>
        <dbReference type="ChEBI" id="CHEBI:58210"/>
    </ligand>
</feature>
<feature type="binding site" evidence="1">
    <location>
        <position position="241"/>
    </location>
    <ligand>
        <name>FMN</name>
        <dbReference type="ChEBI" id="CHEBI:58210"/>
    </ligand>
</feature>
<feature type="binding site" evidence="1">
    <location>
        <begin position="242"/>
        <end position="243"/>
    </location>
    <ligand>
        <name>substrate</name>
    </ligand>
</feature>
<feature type="binding site" evidence="1">
    <location>
        <position position="264"/>
    </location>
    <ligand>
        <name>FMN</name>
        <dbReference type="ChEBI" id="CHEBI:58210"/>
    </ligand>
</feature>
<feature type="binding site" evidence="1">
    <location>
        <position position="293"/>
    </location>
    <ligand>
        <name>FMN</name>
        <dbReference type="ChEBI" id="CHEBI:58210"/>
    </ligand>
</feature>
<feature type="binding site" evidence="1">
    <location>
        <begin position="314"/>
        <end position="315"/>
    </location>
    <ligand>
        <name>FMN</name>
        <dbReference type="ChEBI" id="CHEBI:58210"/>
    </ligand>
</feature>
<proteinExistence type="inferred from homology"/>
<reference key="1">
    <citation type="journal article" date="2004" name="Proc. Natl. Acad. Sci. U.S.A.">
        <title>The louse-borne human pathogen Bartonella quintana is a genomic derivative of the zoonotic agent Bartonella henselae.</title>
        <authorList>
            <person name="Alsmark U.C.M."/>
            <person name="Frank A.C."/>
            <person name="Karlberg E.O."/>
            <person name="Legault B.-A."/>
            <person name="Ardell D.H."/>
            <person name="Canbaeck B."/>
            <person name="Eriksson A.-S."/>
            <person name="Naeslund A.K."/>
            <person name="Handley S.A."/>
            <person name="Huvet M."/>
            <person name="La Scola B."/>
            <person name="Holmberg M."/>
            <person name="Andersson S.G.E."/>
        </authorList>
    </citation>
    <scope>NUCLEOTIDE SEQUENCE [LARGE SCALE GENOMIC DNA]</scope>
    <source>
        <strain>ATCC 49882 / DSM 28221 / CCUG 30454 / Houston 1</strain>
    </source>
</reference>
<accession>Q6G4F7</accession>
<name>PYRD_BARHE</name>
<evidence type="ECO:0000255" key="1">
    <source>
        <dbReference type="HAMAP-Rule" id="MF_00225"/>
    </source>
</evidence>